<sequence length="780" mass="87973">MAPYRPEFSAAEQSRIDAEFSRLARNKSVYLDHAGTTLYAENQVTAAAEQLQRNVICNPHTCRLTGDFVDQVRFKILEFFNTTAEDYHVIFTANATAALSLVAENFDFGSTGDFHFCQENHTSVLGMRERVRANGIYMLKEKEISGGELKKNGTVHKVSGKTGNSLLTFSAQCNFSGYKIPLDTIEKIQIDGLSKPGKQLWGSLGENKENTHNDYYICLDAASFVATSPLDLKKYRPDYVCLSFYKIFGYPTGVGALLVSRRGADVFQKRRFFGGGTINYAYPHAMDYQLRETFHQRYEDGTLPFLAIVGLLEGFRTLERLVPKTDEFSTMERISRHVFGLAKYLEDQLRQLQHPNGEPLVELYNKVGYQDKSRQGGIVAFNVRTESGSFVGFGEIACVAALHGILLRTGCFCNIGACQYYLNLDEDAMDTIYKRAGRICGDYFDLVDGQPTGAVRVSFGYMTTFQDVEQLLQMLRSSYLATKPLQRIQFIEEQAEQLPPLLKERVQLLRPKLLQMAIYPVKSCAAFKIELEGSWPLTDQGLRYDREWMIVDMNGMALTQKRCTELCLIRPVIKVDQLELQFGDNSHFSVPLSLEDQAADSAKCVSKVCRQPVEGLDCGDGVAQWLSENLGLEGLRLLRQSGQRNSSKDQQKLSLVNQAQFLLLNKSSVRSLQFEEPLDETVDRFRANIIIDTGSAFEELTYKALSIGGIQFQVEGPCQRCDMICINQRTGERSPETLTTISRLQKGRMRFGIYITRIPQDTKELEAKEHMTCGDVVLVE</sequence>
<gene>
    <name evidence="2" type="primary">mal</name>
    <name type="ORF">GE17883</name>
</gene>
<protein>
    <recommendedName>
        <fullName evidence="2">Molybdenum cofactor sulfurase</fullName>
        <shortName evidence="2">MCS</shortName>
        <shortName evidence="2">MOS</shortName>
        <shortName evidence="2">MoCo sulfurase</shortName>
        <ecNumber evidence="2">2.8.1.9</ecNumber>
    </recommendedName>
    <alternativeName>
        <fullName evidence="2">Molybdenum cofactor sulfurtransferase</fullName>
    </alternativeName>
    <alternativeName>
        <fullName evidence="2">Protein maroon-like</fullName>
        <shortName evidence="2">Ma-l</shortName>
    </alternativeName>
</protein>
<proteinExistence type="inferred from homology"/>
<organism>
    <name type="scientific">Drosophila yakuba</name>
    <name type="common">Fruit fly</name>
    <dbReference type="NCBI Taxonomy" id="7245"/>
    <lineage>
        <taxon>Eukaryota</taxon>
        <taxon>Metazoa</taxon>
        <taxon>Ecdysozoa</taxon>
        <taxon>Arthropoda</taxon>
        <taxon>Hexapoda</taxon>
        <taxon>Insecta</taxon>
        <taxon>Pterygota</taxon>
        <taxon>Neoptera</taxon>
        <taxon>Endopterygota</taxon>
        <taxon>Diptera</taxon>
        <taxon>Brachycera</taxon>
        <taxon>Muscomorpha</taxon>
        <taxon>Ephydroidea</taxon>
        <taxon>Drosophilidae</taxon>
        <taxon>Drosophila</taxon>
        <taxon>Sophophora</taxon>
    </lineage>
</organism>
<comment type="function">
    <text evidence="2">Sulfurates the molybdenum cofactor. Sulfation of molybdenum is essential for xanthine dehydrogenase (XDH) and aldehyde oxidase (ADO) enzymes in which molybdenum cofactor is liganded by 1 oxygen and 1 sulfur atom in active form.</text>
</comment>
<comment type="catalytic activity">
    <reaction evidence="2">
        <text>Mo-molybdopterin + L-cysteine + AH2 = thio-Mo-molybdopterin + L-alanine + A + H2O</text>
        <dbReference type="Rhea" id="RHEA:42636"/>
        <dbReference type="ChEBI" id="CHEBI:13193"/>
        <dbReference type="ChEBI" id="CHEBI:15377"/>
        <dbReference type="ChEBI" id="CHEBI:17499"/>
        <dbReference type="ChEBI" id="CHEBI:35235"/>
        <dbReference type="ChEBI" id="CHEBI:57972"/>
        <dbReference type="ChEBI" id="CHEBI:71302"/>
        <dbReference type="ChEBI" id="CHEBI:82685"/>
        <dbReference type="EC" id="2.8.1.9"/>
    </reaction>
</comment>
<comment type="cofactor">
    <cofactor evidence="2">
        <name>pyridoxal 5'-phosphate</name>
        <dbReference type="ChEBI" id="CHEBI:597326"/>
    </cofactor>
</comment>
<comment type="similarity">
    <text evidence="2">Belongs to the class-V pyridoxal-phosphate-dependent aminotransferase family. MOCOS subfamily.</text>
</comment>
<dbReference type="EC" id="2.8.1.9" evidence="2"/>
<dbReference type="EMBL" id="CM000162">
    <property type="protein sequence ID" value="EDX03016.1"/>
    <property type="molecule type" value="Genomic_DNA"/>
</dbReference>
<dbReference type="SMR" id="B4PYH5"/>
<dbReference type="EnsemblMetazoa" id="FBtr0264401">
    <property type="protein sequence ID" value="FBpp0262893"/>
    <property type="gene ID" value="FBgn0235321"/>
</dbReference>
<dbReference type="EnsemblMetazoa" id="XM_002101872.4">
    <property type="protein sequence ID" value="XP_002101908.1"/>
    <property type="gene ID" value="LOC6526091"/>
</dbReference>
<dbReference type="GeneID" id="6526091"/>
<dbReference type="KEGG" id="dya:Dyak_GE17883"/>
<dbReference type="CTD" id="4118"/>
<dbReference type="eggNOG" id="KOG2142">
    <property type="taxonomic scope" value="Eukaryota"/>
</dbReference>
<dbReference type="HOGENOM" id="CLU_010913_0_1_1"/>
<dbReference type="OMA" id="PCTRCQM"/>
<dbReference type="OrthoDB" id="420046at2759"/>
<dbReference type="PhylomeDB" id="B4PYH5"/>
<dbReference type="Proteomes" id="UP000002282">
    <property type="component" value="Chromosome X"/>
</dbReference>
<dbReference type="GO" id="GO:0016829">
    <property type="term" value="F:lyase activity"/>
    <property type="evidence" value="ECO:0007669"/>
    <property type="project" value="UniProtKB-UniRule"/>
</dbReference>
<dbReference type="GO" id="GO:0008265">
    <property type="term" value="F:molybdenum cofactor sulfurtransferase activity"/>
    <property type="evidence" value="ECO:0000250"/>
    <property type="project" value="UniProtKB"/>
</dbReference>
<dbReference type="GO" id="GO:0030151">
    <property type="term" value="F:molybdenum ion binding"/>
    <property type="evidence" value="ECO:0007669"/>
    <property type="project" value="UniProtKB-UniRule"/>
</dbReference>
<dbReference type="GO" id="GO:0030170">
    <property type="term" value="F:pyridoxal phosphate binding"/>
    <property type="evidence" value="ECO:0007669"/>
    <property type="project" value="UniProtKB-UniRule"/>
</dbReference>
<dbReference type="GO" id="GO:0006777">
    <property type="term" value="P:Mo-molybdopterin cofactor biosynthetic process"/>
    <property type="evidence" value="ECO:0007669"/>
    <property type="project" value="UniProtKB-UniRule"/>
</dbReference>
<dbReference type="GO" id="GO:0043545">
    <property type="term" value="P:molybdopterin cofactor metabolic process"/>
    <property type="evidence" value="ECO:0000250"/>
    <property type="project" value="UniProtKB"/>
</dbReference>
<dbReference type="FunFam" id="3.40.640.10:FF:000119">
    <property type="entry name" value="Molybdenum cofactor sulfurase"/>
    <property type="match status" value="1"/>
</dbReference>
<dbReference type="FunFam" id="3.90.1150.10:FF:000079">
    <property type="entry name" value="Molybdenum cofactor sulfurase"/>
    <property type="match status" value="1"/>
</dbReference>
<dbReference type="Gene3D" id="3.90.1150.10">
    <property type="entry name" value="Aspartate Aminotransferase, domain 1"/>
    <property type="match status" value="1"/>
</dbReference>
<dbReference type="Gene3D" id="3.40.640.10">
    <property type="entry name" value="Type I PLP-dependent aspartate aminotransferase-like (Major domain)"/>
    <property type="match status" value="1"/>
</dbReference>
<dbReference type="HAMAP" id="MF_03050">
    <property type="entry name" value="MOCOS"/>
    <property type="match status" value="1"/>
</dbReference>
<dbReference type="InterPro" id="IPR000192">
    <property type="entry name" value="Aminotrans_V_dom"/>
</dbReference>
<dbReference type="InterPro" id="IPR005302">
    <property type="entry name" value="MoCF_Sase_C"/>
</dbReference>
<dbReference type="InterPro" id="IPR028886">
    <property type="entry name" value="MoCo_sulfurase"/>
</dbReference>
<dbReference type="InterPro" id="IPR005303">
    <property type="entry name" value="MOCOS_middle"/>
</dbReference>
<dbReference type="InterPro" id="IPR015424">
    <property type="entry name" value="PyrdxlP-dep_Trfase"/>
</dbReference>
<dbReference type="InterPro" id="IPR015421">
    <property type="entry name" value="PyrdxlP-dep_Trfase_major"/>
</dbReference>
<dbReference type="InterPro" id="IPR015422">
    <property type="entry name" value="PyrdxlP-dep_Trfase_small"/>
</dbReference>
<dbReference type="InterPro" id="IPR011037">
    <property type="entry name" value="Pyrv_Knase-like_insert_dom_sf"/>
</dbReference>
<dbReference type="PANTHER" id="PTHR14237:SF19">
    <property type="entry name" value="MITOCHONDRIAL AMIDOXIME REDUCING COMPONENT 1"/>
    <property type="match status" value="1"/>
</dbReference>
<dbReference type="PANTHER" id="PTHR14237">
    <property type="entry name" value="MOLYBDOPTERIN COFACTOR SULFURASE MOSC"/>
    <property type="match status" value="1"/>
</dbReference>
<dbReference type="Pfam" id="PF00266">
    <property type="entry name" value="Aminotran_5"/>
    <property type="match status" value="2"/>
</dbReference>
<dbReference type="Pfam" id="PF03473">
    <property type="entry name" value="MOSC"/>
    <property type="match status" value="1"/>
</dbReference>
<dbReference type="Pfam" id="PF03476">
    <property type="entry name" value="MOSC_N"/>
    <property type="match status" value="1"/>
</dbReference>
<dbReference type="SUPFAM" id="SSF141673">
    <property type="entry name" value="MOSC N-terminal domain-like"/>
    <property type="match status" value="1"/>
</dbReference>
<dbReference type="SUPFAM" id="SSF50800">
    <property type="entry name" value="PK beta-barrel domain-like"/>
    <property type="match status" value="1"/>
</dbReference>
<dbReference type="SUPFAM" id="SSF53383">
    <property type="entry name" value="PLP-dependent transferases"/>
    <property type="match status" value="1"/>
</dbReference>
<dbReference type="PROSITE" id="PS51340">
    <property type="entry name" value="MOSC"/>
    <property type="match status" value="1"/>
</dbReference>
<evidence type="ECO:0000250" key="1"/>
<evidence type="ECO:0000255" key="2">
    <source>
        <dbReference type="HAMAP-Rule" id="MF_03050"/>
    </source>
</evidence>
<name>MOCOS_DROYA</name>
<keyword id="KW-0501">Molybdenum cofactor biosynthesis</keyword>
<keyword id="KW-0597">Phosphoprotein</keyword>
<keyword id="KW-0663">Pyridoxal phosphate</keyword>
<keyword id="KW-0808">Transferase</keyword>
<reference key="1">
    <citation type="journal article" date="2007" name="Nature">
        <title>Evolution of genes and genomes on the Drosophila phylogeny.</title>
        <authorList>
            <consortium name="Drosophila 12 genomes consortium"/>
        </authorList>
    </citation>
    <scope>NUCLEOTIDE SEQUENCE [LARGE SCALE GENOMIC DNA]</scope>
    <source>
        <strain>Tai18E2 / Tucson 14021-0261.01</strain>
    </source>
</reference>
<accession>B4PYH5</accession>
<feature type="chain" id="PRO_0000369377" description="Molybdenum cofactor sulfurase">
    <location>
        <begin position="1"/>
        <end position="780"/>
    </location>
</feature>
<feature type="domain" description="MOSC" evidence="2">
    <location>
        <begin position="635"/>
        <end position="780"/>
    </location>
</feature>
<feature type="active site" evidence="2">
    <location>
        <position position="413"/>
    </location>
</feature>
<feature type="modified residue" description="N6-(pyridoxal phosphate)lysine" evidence="2">
    <location>
        <position position="246"/>
    </location>
</feature>
<feature type="modified residue" description="Phosphoserine" evidence="1">
    <location>
        <position position="734"/>
    </location>
</feature>